<feature type="chain" id="PRO_1000166546" description="ATP synthase subunit alpha">
    <location>
        <begin position="1"/>
        <end position="509"/>
    </location>
</feature>
<feature type="binding site" evidence="1">
    <location>
        <begin position="169"/>
        <end position="176"/>
    </location>
    <ligand>
        <name>ATP</name>
        <dbReference type="ChEBI" id="CHEBI:30616"/>
    </ligand>
</feature>
<feature type="site" description="Required for activity" evidence="1">
    <location>
        <position position="370"/>
    </location>
</feature>
<evidence type="ECO:0000255" key="1">
    <source>
        <dbReference type="HAMAP-Rule" id="MF_01346"/>
    </source>
</evidence>
<comment type="function">
    <text evidence="1">Produces ATP from ADP in the presence of a proton gradient across the membrane. The alpha chain is a regulatory subunit.</text>
</comment>
<comment type="catalytic activity">
    <reaction evidence="1">
        <text>ATP + H2O + 4 H(+)(in) = ADP + phosphate + 5 H(+)(out)</text>
        <dbReference type="Rhea" id="RHEA:57720"/>
        <dbReference type="ChEBI" id="CHEBI:15377"/>
        <dbReference type="ChEBI" id="CHEBI:15378"/>
        <dbReference type="ChEBI" id="CHEBI:30616"/>
        <dbReference type="ChEBI" id="CHEBI:43474"/>
        <dbReference type="ChEBI" id="CHEBI:456216"/>
        <dbReference type="EC" id="7.1.2.2"/>
    </reaction>
</comment>
<comment type="subunit">
    <text evidence="1">F-type ATPases have 2 components, CF(1) - the catalytic core - and CF(0) - the membrane proton channel. CF(1) has five subunits: alpha(3), beta(3), gamma(1), delta(1), epsilon(1). CF(0) has three main subunits: a(1), b(2) and c(9-12). The alpha and beta chains form an alternating ring which encloses part of the gamma chain. CF(1) is attached to CF(0) by a central stalk formed by the gamma and epsilon chains, while a peripheral stalk is formed by the delta and b chains.</text>
</comment>
<comment type="subcellular location">
    <subcellularLocation>
        <location evidence="1">Cell inner membrane</location>
        <topology evidence="1">Peripheral membrane protein</topology>
    </subcellularLocation>
</comment>
<comment type="similarity">
    <text evidence="1">Belongs to the ATPase alpha/beta chains family.</text>
</comment>
<organism>
    <name type="scientific">Methylobacterium nodulans (strain LMG 21967 / CNCM I-2342 / ORS 2060)</name>
    <dbReference type="NCBI Taxonomy" id="460265"/>
    <lineage>
        <taxon>Bacteria</taxon>
        <taxon>Pseudomonadati</taxon>
        <taxon>Pseudomonadota</taxon>
        <taxon>Alphaproteobacteria</taxon>
        <taxon>Hyphomicrobiales</taxon>
        <taxon>Methylobacteriaceae</taxon>
        <taxon>Methylobacterium</taxon>
    </lineage>
</organism>
<gene>
    <name evidence="1" type="primary">atpA</name>
    <name type="ordered locus">Mnod_7382</name>
</gene>
<proteinExistence type="inferred from homology"/>
<dbReference type="EC" id="7.1.2.2" evidence="1"/>
<dbReference type="EMBL" id="CP001349">
    <property type="protein sequence ID" value="ACL62119.1"/>
    <property type="molecule type" value="Genomic_DNA"/>
</dbReference>
<dbReference type="RefSeq" id="WP_015933677.1">
    <property type="nucleotide sequence ID" value="NC_011894.1"/>
</dbReference>
<dbReference type="SMR" id="B8IN03"/>
<dbReference type="STRING" id="460265.Mnod_7382"/>
<dbReference type="KEGG" id="mno:Mnod_7382"/>
<dbReference type="eggNOG" id="COG0056">
    <property type="taxonomic scope" value="Bacteria"/>
</dbReference>
<dbReference type="HOGENOM" id="CLU_010091_2_1_5"/>
<dbReference type="OrthoDB" id="9803053at2"/>
<dbReference type="Proteomes" id="UP000008207">
    <property type="component" value="Chromosome"/>
</dbReference>
<dbReference type="GO" id="GO:0005886">
    <property type="term" value="C:plasma membrane"/>
    <property type="evidence" value="ECO:0007669"/>
    <property type="project" value="UniProtKB-SubCell"/>
</dbReference>
<dbReference type="GO" id="GO:0045259">
    <property type="term" value="C:proton-transporting ATP synthase complex"/>
    <property type="evidence" value="ECO:0007669"/>
    <property type="project" value="UniProtKB-KW"/>
</dbReference>
<dbReference type="GO" id="GO:0043531">
    <property type="term" value="F:ADP binding"/>
    <property type="evidence" value="ECO:0007669"/>
    <property type="project" value="TreeGrafter"/>
</dbReference>
<dbReference type="GO" id="GO:0005524">
    <property type="term" value="F:ATP binding"/>
    <property type="evidence" value="ECO:0007669"/>
    <property type="project" value="UniProtKB-UniRule"/>
</dbReference>
<dbReference type="GO" id="GO:0046933">
    <property type="term" value="F:proton-transporting ATP synthase activity, rotational mechanism"/>
    <property type="evidence" value="ECO:0007669"/>
    <property type="project" value="UniProtKB-UniRule"/>
</dbReference>
<dbReference type="CDD" id="cd18113">
    <property type="entry name" value="ATP-synt_F1_alpha_C"/>
    <property type="match status" value="1"/>
</dbReference>
<dbReference type="CDD" id="cd18116">
    <property type="entry name" value="ATP-synt_F1_alpha_N"/>
    <property type="match status" value="1"/>
</dbReference>
<dbReference type="CDD" id="cd01132">
    <property type="entry name" value="F1-ATPase_alpha_CD"/>
    <property type="match status" value="1"/>
</dbReference>
<dbReference type="FunFam" id="1.20.150.20:FF:000001">
    <property type="entry name" value="ATP synthase subunit alpha"/>
    <property type="match status" value="1"/>
</dbReference>
<dbReference type="FunFam" id="2.40.30.20:FF:000001">
    <property type="entry name" value="ATP synthase subunit alpha"/>
    <property type="match status" value="1"/>
</dbReference>
<dbReference type="FunFam" id="3.40.50.300:FF:002432">
    <property type="entry name" value="ATP synthase subunit alpha, mitochondrial"/>
    <property type="match status" value="1"/>
</dbReference>
<dbReference type="Gene3D" id="2.40.30.20">
    <property type="match status" value="1"/>
</dbReference>
<dbReference type="Gene3D" id="1.20.150.20">
    <property type="entry name" value="ATP synthase alpha/beta chain, C-terminal domain"/>
    <property type="match status" value="1"/>
</dbReference>
<dbReference type="Gene3D" id="3.40.50.300">
    <property type="entry name" value="P-loop containing nucleotide triphosphate hydrolases"/>
    <property type="match status" value="1"/>
</dbReference>
<dbReference type="HAMAP" id="MF_01346">
    <property type="entry name" value="ATP_synth_alpha_bact"/>
    <property type="match status" value="1"/>
</dbReference>
<dbReference type="InterPro" id="IPR023366">
    <property type="entry name" value="ATP_synth_asu-like_sf"/>
</dbReference>
<dbReference type="InterPro" id="IPR000793">
    <property type="entry name" value="ATP_synth_asu_C"/>
</dbReference>
<dbReference type="InterPro" id="IPR038376">
    <property type="entry name" value="ATP_synth_asu_C_sf"/>
</dbReference>
<dbReference type="InterPro" id="IPR033732">
    <property type="entry name" value="ATP_synth_F1_a_nt-bd_dom"/>
</dbReference>
<dbReference type="InterPro" id="IPR005294">
    <property type="entry name" value="ATP_synth_F1_asu"/>
</dbReference>
<dbReference type="InterPro" id="IPR020003">
    <property type="entry name" value="ATPase_a/bsu_AS"/>
</dbReference>
<dbReference type="InterPro" id="IPR004100">
    <property type="entry name" value="ATPase_F1/V1/A1_a/bsu_N"/>
</dbReference>
<dbReference type="InterPro" id="IPR036121">
    <property type="entry name" value="ATPase_F1/V1/A1_a/bsu_N_sf"/>
</dbReference>
<dbReference type="InterPro" id="IPR000194">
    <property type="entry name" value="ATPase_F1/V1/A1_a/bsu_nucl-bd"/>
</dbReference>
<dbReference type="InterPro" id="IPR027417">
    <property type="entry name" value="P-loop_NTPase"/>
</dbReference>
<dbReference type="NCBIfam" id="TIGR00962">
    <property type="entry name" value="atpA"/>
    <property type="match status" value="1"/>
</dbReference>
<dbReference type="NCBIfam" id="NF009884">
    <property type="entry name" value="PRK13343.1"/>
    <property type="match status" value="1"/>
</dbReference>
<dbReference type="PANTHER" id="PTHR48082">
    <property type="entry name" value="ATP SYNTHASE SUBUNIT ALPHA, MITOCHONDRIAL"/>
    <property type="match status" value="1"/>
</dbReference>
<dbReference type="PANTHER" id="PTHR48082:SF2">
    <property type="entry name" value="ATP SYNTHASE SUBUNIT ALPHA, MITOCHONDRIAL"/>
    <property type="match status" value="1"/>
</dbReference>
<dbReference type="Pfam" id="PF00006">
    <property type="entry name" value="ATP-synt_ab"/>
    <property type="match status" value="1"/>
</dbReference>
<dbReference type="Pfam" id="PF00306">
    <property type="entry name" value="ATP-synt_ab_C"/>
    <property type="match status" value="1"/>
</dbReference>
<dbReference type="Pfam" id="PF02874">
    <property type="entry name" value="ATP-synt_ab_N"/>
    <property type="match status" value="1"/>
</dbReference>
<dbReference type="PIRSF" id="PIRSF039088">
    <property type="entry name" value="F_ATPase_subunit_alpha"/>
    <property type="match status" value="1"/>
</dbReference>
<dbReference type="SUPFAM" id="SSF47917">
    <property type="entry name" value="C-terminal domain of alpha and beta subunits of F1 ATP synthase"/>
    <property type="match status" value="1"/>
</dbReference>
<dbReference type="SUPFAM" id="SSF50615">
    <property type="entry name" value="N-terminal domain of alpha and beta subunits of F1 ATP synthase"/>
    <property type="match status" value="1"/>
</dbReference>
<dbReference type="SUPFAM" id="SSF52540">
    <property type="entry name" value="P-loop containing nucleoside triphosphate hydrolases"/>
    <property type="match status" value="1"/>
</dbReference>
<dbReference type="PROSITE" id="PS00152">
    <property type="entry name" value="ATPASE_ALPHA_BETA"/>
    <property type="match status" value="1"/>
</dbReference>
<name>ATPA_METNO</name>
<sequence length="509" mass="54652">MDIRAAEISAILKEQIKNFGQEAEVTEVGQVLSVGDGIARVYGLDKVQAGEMVEFESGVRGMALNLEQDNVGVVIFGVDRDIKEGQTVKRTGAIVDVPVGKGLLGRVVDALGNPIDGKGPIVASERRRVDVKAPGIIPRKSVHEPMATGLKSVDALIPIGRGQRELIIGDRQTGKTAIALDTILNQKPAHEGSDEKAKLYCVYVAVGQKRSTVAQFVKVLEDNGALEYSIVIAATASDPAPMQFLAPFSGCAMGEFFRDNGMHAVIIYDDLSKQAVAYRQMSLLLRRPPGREAYPGDVFYLHSRLLERAAKMGDAAGAGSLTALPVIETQANDVSAYIPTNVISITDGQIFLETDLFYQGVRPAVNVGLSVSRVGSAAQTKAMKKVAGKIKGELAQYREMAAFAQFGSDLDAATQRLLNRGSRLTELLKQPQFSPLKMEEQVAVIYAGVNGYLDPIPVNRVRAFEDGLLATLRGKHADLLEAIRASKDLSDESAAKLKGVVEAFAKSFG</sequence>
<keyword id="KW-0066">ATP synthesis</keyword>
<keyword id="KW-0067">ATP-binding</keyword>
<keyword id="KW-0997">Cell inner membrane</keyword>
<keyword id="KW-1003">Cell membrane</keyword>
<keyword id="KW-0139">CF(1)</keyword>
<keyword id="KW-0375">Hydrogen ion transport</keyword>
<keyword id="KW-0406">Ion transport</keyword>
<keyword id="KW-0472">Membrane</keyword>
<keyword id="KW-0547">Nucleotide-binding</keyword>
<keyword id="KW-1185">Reference proteome</keyword>
<keyword id="KW-1278">Translocase</keyword>
<keyword id="KW-0813">Transport</keyword>
<reference key="1">
    <citation type="submission" date="2009-01" db="EMBL/GenBank/DDBJ databases">
        <title>Complete sequence of chromosome of Methylobacterium nodulans ORS 2060.</title>
        <authorList>
            <consortium name="US DOE Joint Genome Institute"/>
            <person name="Lucas S."/>
            <person name="Copeland A."/>
            <person name="Lapidus A."/>
            <person name="Glavina del Rio T."/>
            <person name="Dalin E."/>
            <person name="Tice H."/>
            <person name="Bruce D."/>
            <person name="Goodwin L."/>
            <person name="Pitluck S."/>
            <person name="Sims D."/>
            <person name="Brettin T."/>
            <person name="Detter J.C."/>
            <person name="Han C."/>
            <person name="Larimer F."/>
            <person name="Land M."/>
            <person name="Hauser L."/>
            <person name="Kyrpides N."/>
            <person name="Ivanova N."/>
            <person name="Marx C.J."/>
            <person name="Richardson P."/>
        </authorList>
    </citation>
    <scope>NUCLEOTIDE SEQUENCE [LARGE SCALE GENOMIC DNA]</scope>
    <source>
        <strain>LMG 21967 / CNCM I-2342 / ORS 2060</strain>
    </source>
</reference>
<accession>B8IN03</accession>
<protein>
    <recommendedName>
        <fullName evidence="1">ATP synthase subunit alpha</fullName>
        <ecNumber evidence="1">7.1.2.2</ecNumber>
    </recommendedName>
    <alternativeName>
        <fullName evidence="1">ATP synthase F1 sector subunit alpha</fullName>
    </alternativeName>
    <alternativeName>
        <fullName evidence="1">F-ATPase subunit alpha</fullName>
    </alternativeName>
</protein>